<feature type="chain" id="PRO_0000086914" description="Protein ECM18">
    <location>
        <begin position="1"/>
        <end position="453"/>
    </location>
</feature>
<feature type="domain" description="AB hydrolase-1" evidence="2">
    <location>
        <begin position="130"/>
        <end position="435"/>
    </location>
</feature>
<feature type="short sequence motif" description="HXXXXD motif" evidence="1">
    <location>
        <begin position="428"/>
        <end position="433"/>
    </location>
</feature>
<keyword id="KW-0012">Acyltransferase</keyword>
<keyword id="KW-0961">Cell wall biogenesis/degradation</keyword>
<keyword id="KW-0496">Mitochondrion</keyword>
<keyword id="KW-1185">Reference proteome</keyword>
<keyword id="KW-0808">Transferase</keyword>
<dbReference type="EC" id="2.3.1.-"/>
<dbReference type="EMBL" id="Z48758">
    <property type="protein sequence ID" value="CAA88678.1"/>
    <property type="molecule type" value="Genomic_DNA"/>
</dbReference>
<dbReference type="EMBL" id="BK006938">
    <property type="protein sequence ID" value="DAA11971.1"/>
    <property type="molecule type" value="Genomic_DNA"/>
</dbReference>
<dbReference type="PIR" id="S52690">
    <property type="entry name" value="S52690"/>
</dbReference>
<dbReference type="RefSeq" id="NP_010410.3">
    <property type="nucleotide sequence ID" value="NM_001180433.3"/>
</dbReference>
<dbReference type="SMR" id="Q04623"/>
<dbReference type="BioGRID" id="32181">
    <property type="interactions" value="32"/>
</dbReference>
<dbReference type="FunCoup" id="Q04623">
    <property type="interactions" value="304"/>
</dbReference>
<dbReference type="STRING" id="4932.YDR125C"/>
<dbReference type="ESTHER" id="yeast-ECM18">
    <property type="family name" value="CGI-58_ABHD5_ABHD4"/>
</dbReference>
<dbReference type="MEROPS" id="S33.A42"/>
<dbReference type="PaxDb" id="4932-YDR125C"/>
<dbReference type="PeptideAtlas" id="Q04623"/>
<dbReference type="EnsemblFungi" id="YDR125C_mRNA">
    <property type="protein sequence ID" value="YDR125C"/>
    <property type="gene ID" value="YDR125C"/>
</dbReference>
<dbReference type="GeneID" id="851703"/>
<dbReference type="KEGG" id="sce:YDR125C"/>
<dbReference type="AGR" id="SGD:S000002532"/>
<dbReference type="SGD" id="S000002532">
    <property type="gene designation" value="ECM18"/>
</dbReference>
<dbReference type="VEuPathDB" id="FungiDB:YDR125C"/>
<dbReference type="eggNOG" id="KOG4409">
    <property type="taxonomic scope" value="Eukaryota"/>
</dbReference>
<dbReference type="GeneTree" id="ENSGT00940000170137"/>
<dbReference type="HOGENOM" id="CLU_017361_1_1_1"/>
<dbReference type="InParanoid" id="Q04623"/>
<dbReference type="OMA" id="YGQYDFM"/>
<dbReference type="OrthoDB" id="7457040at2759"/>
<dbReference type="BioCyc" id="YEAST:G3O-29725-MONOMER"/>
<dbReference type="BioGRID-ORCS" id="851703">
    <property type="hits" value="0 hits in 10 CRISPR screens"/>
</dbReference>
<dbReference type="PRO" id="PR:Q04623"/>
<dbReference type="Proteomes" id="UP000002311">
    <property type="component" value="Chromosome IV"/>
</dbReference>
<dbReference type="RNAct" id="Q04623">
    <property type="molecule type" value="protein"/>
</dbReference>
<dbReference type="GO" id="GO:0005743">
    <property type="term" value="C:mitochondrial inner membrane"/>
    <property type="evidence" value="ECO:0000318"/>
    <property type="project" value="GO_Central"/>
</dbReference>
<dbReference type="GO" id="GO:0005739">
    <property type="term" value="C:mitochondrion"/>
    <property type="evidence" value="ECO:0007005"/>
    <property type="project" value="SGD"/>
</dbReference>
<dbReference type="GO" id="GO:0052689">
    <property type="term" value="F:carboxylic ester hydrolase activity"/>
    <property type="evidence" value="ECO:0000318"/>
    <property type="project" value="GO_Central"/>
</dbReference>
<dbReference type="GO" id="GO:0042171">
    <property type="term" value="F:lysophosphatidic acid acyltransferase activity"/>
    <property type="evidence" value="ECO:0000318"/>
    <property type="project" value="GO_Central"/>
</dbReference>
<dbReference type="GO" id="GO:0004623">
    <property type="term" value="F:phospholipase A2 activity"/>
    <property type="evidence" value="ECO:0000318"/>
    <property type="project" value="GO_Central"/>
</dbReference>
<dbReference type="GO" id="GO:0035965">
    <property type="term" value="P:cardiolipin acyl-chain remodeling"/>
    <property type="evidence" value="ECO:0000318"/>
    <property type="project" value="GO_Central"/>
</dbReference>
<dbReference type="GO" id="GO:0071555">
    <property type="term" value="P:cell wall organization"/>
    <property type="evidence" value="ECO:0007669"/>
    <property type="project" value="UniProtKB-KW"/>
</dbReference>
<dbReference type="GO" id="GO:0055088">
    <property type="term" value="P:lipid homeostasis"/>
    <property type="evidence" value="ECO:0000318"/>
    <property type="project" value="GO_Central"/>
</dbReference>
<dbReference type="GO" id="GO:0006654">
    <property type="term" value="P:phosphatidic acid biosynthetic process"/>
    <property type="evidence" value="ECO:0000318"/>
    <property type="project" value="GO_Central"/>
</dbReference>
<dbReference type="Gene3D" id="3.40.50.1820">
    <property type="entry name" value="alpha/beta hydrolase"/>
    <property type="match status" value="1"/>
</dbReference>
<dbReference type="InterPro" id="IPR000073">
    <property type="entry name" value="AB_hydrolase_1"/>
</dbReference>
<dbReference type="InterPro" id="IPR029058">
    <property type="entry name" value="AB_hydrolase_fold"/>
</dbReference>
<dbReference type="PANTHER" id="PTHR42886:SF23">
    <property type="entry name" value="1-ACYLGLYCEROL-3-PHOSPHATE O-ACYLTRANSFERASE ICT1-RELATED"/>
    <property type="match status" value="1"/>
</dbReference>
<dbReference type="PANTHER" id="PTHR42886">
    <property type="entry name" value="RE40534P-RELATED"/>
    <property type="match status" value="1"/>
</dbReference>
<dbReference type="Pfam" id="PF00561">
    <property type="entry name" value="Abhydrolase_1"/>
    <property type="match status" value="1"/>
</dbReference>
<dbReference type="SUPFAM" id="SSF53474">
    <property type="entry name" value="alpha/beta-Hydrolases"/>
    <property type="match status" value="1"/>
</dbReference>
<reference key="1">
    <citation type="journal article" date="1997" name="Nature">
        <title>The nucleotide sequence of Saccharomyces cerevisiae chromosome IV.</title>
        <authorList>
            <person name="Jacq C."/>
            <person name="Alt-Moerbe J."/>
            <person name="Andre B."/>
            <person name="Arnold W."/>
            <person name="Bahr A."/>
            <person name="Ballesta J.P.G."/>
            <person name="Bargues M."/>
            <person name="Baron L."/>
            <person name="Becker A."/>
            <person name="Biteau N."/>
            <person name="Bloecker H."/>
            <person name="Blugeon C."/>
            <person name="Boskovic J."/>
            <person name="Brandt P."/>
            <person name="Brueckner M."/>
            <person name="Buitrago M.J."/>
            <person name="Coster F."/>
            <person name="Delaveau T."/>
            <person name="del Rey F."/>
            <person name="Dujon B."/>
            <person name="Eide L.G."/>
            <person name="Garcia-Cantalejo J.M."/>
            <person name="Goffeau A."/>
            <person name="Gomez-Peris A."/>
            <person name="Granotier C."/>
            <person name="Hanemann V."/>
            <person name="Hankeln T."/>
            <person name="Hoheisel J.D."/>
            <person name="Jaeger W."/>
            <person name="Jimenez A."/>
            <person name="Jonniaux J.-L."/>
            <person name="Kraemer C."/>
            <person name="Kuester H."/>
            <person name="Laamanen P."/>
            <person name="Legros Y."/>
            <person name="Louis E.J."/>
            <person name="Moeller-Rieker S."/>
            <person name="Monnet A."/>
            <person name="Moro M."/>
            <person name="Mueller-Auer S."/>
            <person name="Nussbaumer B."/>
            <person name="Paricio N."/>
            <person name="Paulin L."/>
            <person name="Perea J."/>
            <person name="Perez-Alonso M."/>
            <person name="Perez-Ortin J.E."/>
            <person name="Pohl T.M."/>
            <person name="Prydz H."/>
            <person name="Purnelle B."/>
            <person name="Rasmussen S.W."/>
            <person name="Remacha M.A."/>
            <person name="Revuelta J.L."/>
            <person name="Rieger M."/>
            <person name="Salom D."/>
            <person name="Saluz H.P."/>
            <person name="Saiz J.E."/>
            <person name="Saren A.-M."/>
            <person name="Schaefer M."/>
            <person name="Scharfe M."/>
            <person name="Schmidt E.R."/>
            <person name="Schneider C."/>
            <person name="Scholler P."/>
            <person name="Schwarz S."/>
            <person name="Soler-Mira A."/>
            <person name="Urrestarazu L.A."/>
            <person name="Verhasselt P."/>
            <person name="Vissers S."/>
            <person name="Voet M."/>
            <person name="Volckaert G."/>
            <person name="Wagner G."/>
            <person name="Wambutt R."/>
            <person name="Wedler E."/>
            <person name="Wedler H."/>
            <person name="Woelfl S."/>
            <person name="Harris D.E."/>
            <person name="Bowman S."/>
            <person name="Brown D."/>
            <person name="Churcher C.M."/>
            <person name="Connor R."/>
            <person name="Dedman K."/>
            <person name="Gentles S."/>
            <person name="Hamlin N."/>
            <person name="Hunt S."/>
            <person name="Jones L."/>
            <person name="McDonald S."/>
            <person name="Murphy L.D."/>
            <person name="Niblett D."/>
            <person name="Odell C."/>
            <person name="Oliver K."/>
            <person name="Rajandream M.A."/>
            <person name="Richards C."/>
            <person name="Shore L."/>
            <person name="Walsh S.V."/>
            <person name="Barrell B.G."/>
            <person name="Dietrich F.S."/>
            <person name="Mulligan J.T."/>
            <person name="Allen E."/>
            <person name="Araujo R."/>
            <person name="Aviles E."/>
            <person name="Berno A."/>
            <person name="Carpenter J."/>
            <person name="Chen E."/>
            <person name="Cherry J.M."/>
            <person name="Chung E."/>
            <person name="Duncan M."/>
            <person name="Hunicke-Smith S."/>
            <person name="Hyman R.W."/>
            <person name="Komp C."/>
            <person name="Lashkari D."/>
            <person name="Lew H."/>
            <person name="Lin D."/>
            <person name="Mosedale D."/>
            <person name="Nakahara K."/>
            <person name="Namath A."/>
            <person name="Oefner P."/>
            <person name="Oh C."/>
            <person name="Petel F.X."/>
            <person name="Roberts D."/>
            <person name="Schramm S."/>
            <person name="Schroeder M."/>
            <person name="Shogren T."/>
            <person name="Shroff N."/>
            <person name="Winant A."/>
            <person name="Yelton M.A."/>
            <person name="Botstein D."/>
            <person name="Davis R.W."/>
            <person name="Johnston M."/>
            <person name="Andrews S."/>
            <person name="Brinkman R."/>
            <person name="Cooper J."/>
            <person name="Ding H."/>
            <person name="Du Z."/>
            <person name="Favello A."/>
            <person name="Fulton L."/>
            <person name="Gattung S."/>
            <person name="Greco T."/>
            <person name="Hallsworth K."/>
            <person name="Hawkins J."/>
            <person name="Hillier L.W."/>
            <person name="Jier M."/>
            <person name="Johnson D."/>
            <person name="Johnston L."/>
            <person name="Kirsten J."/>
            <person name="Kucaba T."/>
            <person name="Langston Y."/>
            <person name="Latreille P."/>
            <person name="Le T."/>
            <person name="Mardis E."/>
            <person name="Menezes S."/>
            <person name="Miller N."/>
            <person name="Nhan M."/>
            <person name="Pauley A."/>
            <person name="Peluso D."/>
            <person name="Rifkin L."/>
            <person name="Riles L."/>
            <person name="Taich A."/>
            <person name="Trevaskis E."/>
            <person name="Vignati D."/>
            <person name="Wilcox L."/>
            <person name="Wohldman P."/>
            <person name="Vaudin M."/>
            <person name="Wilson R."/>
            <person name="Waterston R."/>
            <person name="Albermann K."/>
            <person name="Hani J."/>
            <person name="Heumann K."/>
            <person name="Kleine K."/>
            <person name="Mewes H.-W."/>
            <person name="Zollner A."/>
            <person name="Zaccaria P."/>
        </authorList>
    </citation>
    <scope>NUCLEOTIDE SEQUENCE [LARGE SCALE GENOMIC DNA]</scope>
    <source>
        <strain>ATCC 204508 / S288c</strain>
    </source>
</reference>
<reference key="2">
    <citation type="journal article" date="2014" name="G3 (Bethesda)">
        <title>The reference genome sequence of Saccharomyces cerevisiae: Then and now.</title>
        <authorList>
            <person name="Engel S.R."/>
            <person name="Dietrich F.S."/>
            <person name="Fisk D.G."/>
            <person name="Binkley G."/>
            <person name="Balakrishnan R."/>
            <person name="Costanzo M.C."/>
            <person name="Dwight S.S."/>
            <person name="Hitz B.C."/>
            <person name="Karra K."/>
            <person name="Nash R.S."/>
            <person name="Weng S."/>
            <person name="Wong E.D."/>
            <person name="Lloyd P."/>
            <person name="Skrzypek M.S."/>
            <person name="Miyasato S.R."/>
            <person name="Simison M."/>
            <person name="Cherry J.M."/>
        </authorList>
    </citation>
    <scope>GENOME REANNOTATION</scope>
    <source>
        <strain>ATCC 204508 / S288c</strain>
    </source>
</reference>
<reference key="3">
    <citation type="journal article" date="1997" name="Genetics">
        <title>Large scale identification of genes involved in cell surface biosynthesis and architecture in Saccharomyces cerevisiae.</title>
        <authorList>
            <person name="Lussier M."/>
            <person name="White A.-M."/>
            <person name="Sheraton J."/>
            <person name="di Paolo T."/>
            <person name="Treadwell J."/>
            <person name="Southard S.B."/>
            <person name="Horenstein C.I."/>
            <person name="Chen-Weiner J."/>
            <person name="Ram A.F.J."/>
            <person name="Kapteyn J.C."/>
            <person name="Roemer T.W."/>
            <person name="Vo D.H."/>
            <person name="Bondoc D.C."/>
            <person name="Hall J."/>
            <person name="Zhong W.-W."/>
            <person name="Sdicu A.-M."/>
            <person name="Davies J."/>
            <person name="Klis F.M."/>
            <person name="Robbins P.W."/>
            <person name="Bussey H."/>
        </authorList>
    </citation>
    <scope>IDENTIFICATION</scope>
</reference>
<reference key="4">
    <citation type="journal article" date="2003" name="Nature">
        <title>Global analysis of protein localization in budding yeast.</title>
        <authorList>
            <person name="Huh W.-K."/>
            <person name="Falvo J.V."/>
            <person name="Gerke L.C."/>
            <person name="Carroll A.S."/>
            <person name="Howson R.W."/>
            <person name="Weissman J.S."/>
            <person name="O'Shea E.K."/>
        </authorList>
    </citation>
    <scope>SUBCELLULAR LOCATION [LARGE SCALE ANALYSIS]</scope>
</reference>
<reference key="5">
    <citation type="journal article" date="2003" name="Nature">
        <title>Global analysis of protein expression in yeast.</title>
        <authorList>
            <person name="Ghaemmaghami S."/>
            <person name="Huh W.-K."/>
            <person name="Bower K."/>
            <person name="Howson R.W."/>
            <person name="Belle A."/>
            <person name="Dephoure N."/>
            <person name="O'Shea E.K."/>
            <person name="Weissman J.S."/>
        </authorList>
    </citation>
    <scope>LEVEL OF PROTEIN EXPRESSION [LARGE SCALE ANALYSIS]</scope>
</reference>
<name>ECM18_YEAST</name>
<protein>
    <recommendedName>
        <fullName>Protein ECM18</fullName>
        <ecNumber>2.3.1.-</ecNumber>
    </recommendedName>
    <alternativeName>
        <fullName>Extracellular mutant protein 18</fullName>
    </alternativeName>
</protein>
<gene>
    <name type="primary">ECM18</name>
    <name type="ordered locus">YDR125C</name>
    <name type="ORF">YD9727.20C</name>
</gene>
<proteinExistence type="evidence at protein level"/>
<organism>
    <name type="scientific">Saccharomyces cerevisiae (strain ATCC 204508 / S288c)</name>
    <name type="common">Baker's yeast</name>
    <dbReference type="NCBI Taxonomy" id="559292"/>
    <lineage>
        <taxon>Eukaryota</taxon>
        <taxon>Fungi</taxon>
        <taxon>Dikarya</taxon>
        <taxon>Ascomycota</taxon>
        <taxon>Saccharomycotina</taxon>
        <taxon>Saccharomycetes</taxon>
        <taxon>Saccharomycetales</taxon>
        <taxon>Saccharomycetaceae</taxon>
        <taxon>Saccharomyces</taxon>
    </lineage>
</organism>
<sequence>MLLIKRYLMDPESLRRQIMNVYKCYMWKRAFHSNRSLLEVKRREKSLQRKILERILRPKEENAVKKSGFKLWSSHLNNPHKTYMRLEELQRRIMEEVHVEGIKKNDKLFNEINQWHFQNENTSTVRTPTLLIHGYAASSMSFFRNYPGLSKHIRNLYSIDMPASGLSSVPSLEINTTTPLPLDIKFIGENKFKVPYTINANHNKFVIQMYEDFYLDRIEQWRIDNKLGKMNVVGHSFGGYLSFKYAVKYPNSVNKLCLVSPLGVERNIWSVNNNFHSNTLYTIDFKNPNSKFYSKRNMIPKYLFEQQFHILRMMGPLGAKLCWNYIMAAYSRVPSLAYKEYIFELFYGKGGIPEVTTDIFKALFSRCILAKDPLMDSLQYLNVKKLLIVYGQYDWMNKKAGMFMVKELNNLKNCLEGASYLEIPSSGHNLFLDNPESFNQSIVSFLSDETKSP</sequence>
<evidence type="ECO:0000250" key="1"/>
<evidence type="ECO:0000255" key="2"/>
<evidence type="ECO:0000269" key="3">
    <source>
    </source>
</evidence>
<evidence type="ECO:0000269" key="4">
    <source>
    </source>
</evidence>
<evidence type="ECO:0000305" key="5"/>
<accession>Q04623</accession>
<accession>D6VSB1</accession>
<comment type="function">
    <text>May be involved in cell wall organization and biogenesis.</text>
</comment>
<comment type="subcellular location">
    <subcellularLocation>
        <location evidence="3">Mitochondrion</location>
    </subcellularLocation>
</comment>
<comment type="domain">
    <text evidence="1">The HXXXXD motif is essential for acyltransferase activity.</text>
</comment>
<comment type="miscellaneous">
    <text evidence="4">Present with 143 molecules/cell in log phase SD medium.</text>
</comment>
<comment type="similarity">
    <text evidence="5">Belongs to the peptidase S33 family. ABHD4/ABHD5 subfamily.</text>
</comment>